<gene>
    <name evidence="1" type="primary">ais</name>
    <name type="ordered locus">EC55989_2498</name>
</gene>
<keyword id="KW-0378">Hydrolase</keyword>
<keyword id="KW-0574">Periplasm</keyword>
<keyword id="KW-1185">Reference proteome</keyword>
<keyword id="KW-0732">Signal</keyword>
<reference key="1">
    <citation type="journal article" date="2009" name="PLoS Genet.">
        <title>Organised genome dynamics in the Escherichia coli species results in highly diverse adaptive paths.</title>
        <authorList>
            <person name="Touchon M."/>
            <person name="Hoede C."/>
            <person name="Tenaillon O."/>
            <person name="Barbe V."/>
            <person name="Baeriswyl S."/>
            <person name="Bidet P."/>
            <person name="Bingen E."/>
            <person name="Bonacorsi S."/>
            <person name="Bouchier C."/>
            <person name="Bouvet O."/>
            <person name="Calteau A."/>
            <person name="Chiapello H."/>
            <person name="Clermont O."/>
            <person name="Cruveiller S."/>
            <person name="Danchin A."/>
            <person name="Diard M."/>
            <person name="Dossat C."/>
            <person name="Karoui M.E."/>
            <person name="Frapy E."/>
            <person name="Garry L."/>
            <person name="Ghigo J.M."/>
            <person name="Gilles A.M."/>
            <person name="Johnson J."/>
            <person name="Le Bouguenec C."/>
            <person name="Lescat M."/>
            <person name="Mangenot S."/>
            <person name="Martinez-Jehanne V."/>
            <person name="Matic I."/>
            <person name="Nassif X."/>
            <person name="Oztas S."/>
            <person name="Petit M.A."/>
            <person name="Pichon C."/>
            <person name="Rouy Z."/>
            <person name="Ruf C.S."/>
            <person name="Schneider D."/>
            <person name="Tourret J."/>
            <person name="Vacherie B."/>
            <person name="Vallenet D."/>
            <person name="Medigue C."/>
            <person name="Rocha E.P.C."/>
            <person name="Denamur E."/>
        </authorList>
    </citation>
    <scope>NUCLEOTIDE SEQUENCE [LARGE SCALE GENOMIC DNA]</scope>
    <source>
        <strain>55989 / EAEC</strain>
    </source>
</reference>
<evidence type="ECO:0000255" key="1">
    <source>
        <dbReference type="HAMAP-Rule" id="MF_01868"/>
    </source>
</evidence>
<organism>
    <name type="scientific">Escherichia coli (strain 55989 / EAEC)</name>
    <dbReference type="NCBI Taxonomy" id="585055"/>
    <lineage>
        <taxon>Bacteria</taxon>
        <taxon>Pseudomonadati</taxon>
        <taxon>Pseudomonadota</taxon>
        <taxon>Gammaproteobacteria</taxon>
        <taxon>Enterobacterales</taxon>
        <taxon>Enterobacteriaceae</taxon>
        <taxon>Escherichia</taxon>
    </lineage>
</organism>
<name>AIS_ECO55</name>
<comment type="function">
    <text evidence="1">Catalyzes the dephosphorylation of heptose(II) of the outer membrane lipopolysaccharide core.</text>
</comment>
<comment type="pathway">
    <text evidence="1">Bacterial outer membrane biogenesis; lipopolysaccharide metabolism.</text>
</comment>
<comment type="subcellular location">
    <subcellularLocation>
        <location evidence="1">Periplasm</location>
    </subcellularLocation>
</comment>
<comment type="similarity">
    <text evidence="1">Belongs to the phosphoglycerate mutase family. Ais subfamily.</text>
</comment>
<accession>B7LAR7</accession>
<protein>
    <recommendedName>
        <fullName evidence="1">Lipopolysaccharide core heptose(II)-phosphate phosphatase</fullName>
        <ecNumber evidence="1">3.1.3.-</ecNumber>
    </recommendedName>
</protein>
<proteinExistence type="inferred from homology"/>
<dbReference type="EC" id="3.1.3.-" evidence="1"/>
<dbReference type="EMBL" id="CU928145">
    <property type="protein sequence ID" value="CAU98367.1"/>
    <property type="molecule type" value="Genomic_DNA"/>
</dbReference>
<dbReference type="RefSeq" id="WP_001297077.1">
    <property type="nucleotide sequence ID" value="NC_011748.1"/>
</dbReference>
<dbReference type="SMR" id="B7LAR7"/>
<dbReference type="GeneID" id="93774922"/>
<dbReference type="KEGG" id="eck:EC55989_2498"/>
<dbReference type="HOGENOM" id="CLU_106705_1_0_6"/>
<dbReference type="UniPathway" id="UPA00451"/>
<dbReference type="Proteomes" id="UP000000746">
    <property type="component" value="Chromosome"/>
</dbReference>
<dbReference type="GO" id="GO:0042597">
    <property type="term" value="C:periplasmic space"/>
    <property type="evidence" value="ECO:0007669"/>
    <property type="project" value="UniProtKB-SubCell"/>
</dbReference>
<dbReference type="GO" id="GO:0016791">
    <property type="term" value="F:phosphatase activity"/>
    <property type="evidence" value="ECO:0007669"/>
    <property type="project" value="UniProtKB-UniRule"/>
</dbReference>
<dbReference type="GO" id="GO:0008653">
    <property type="term" value="P:lipopolysaccharide metabolic process"/>
    <property type="evidence" value="ECO:0007669"/>
    <property type="project" value="UniProtKB-UniRule"/>
</dbReference>
<dbReference type="CDD" id="cd07040">
    <property type="entry name" value="HP"/>
    <property type="match status" value="1"/>
</dbReference>
<dbReference type="Gene3D" id="3.40.50.1240">
    <property type="entry name" value="Phosphoglycerate mutase-like"/>
    <property type="match status" value="1"/>
</dbReference>
<dbReference type="HAMAP" id="MF_01868">
    <property type="entry name" value="Ais"/>
    <property type="match status" value="1"/>
</dbReference>
<dbReference type="InterPro" id="IPR013078">
    <property type="entry name" value="His_Pase_superF_clade-1"/>
</dbReference>
<dbReference type="InterPro" id="IPR029033">
    <property type="entry name" value="His_PPase_superfam"/>
</dbReference>
<dbReference type="InterPro" id="IPR011310">
    <property type="entry name" value="LipoPS_heptP_Pase"/>
</dbReference>
<dbReference type="NCBIfam" id="NF011945">
    <property type="entry name" value="PRK15416.1"/>
    <property type="match status" value="1"/>
</dbReference>
<dbReference type="Pfam" id="PF00300">
    <property type="entry name" value="His_Phos_1"/>
    <property type="match status" value="1"/>
</dbReference>
<dbReference type="PIRSF" id="PIRSF011416">
    <property type="entry name" value="Ais-TraG-AfrS"/>
    <property type="match status" value="1"/>
</dbReference>
<dbReference type="SUPFAM" id="SSF53254">
    <property type="entry name" value="Phosphoglycerate mutase-like"/>
    <property type="match status" value="1"/>
</dbReference>
<feature type="signal peptide" evidence="1">
    <location>
        <begin position="1"/>
        <end position="25"/>
    </location>
</feature>
<feature type="chain" id="PRO_0000380554" description="Lipopolysaccharide core heptose(II)-phosphate phosphatase">
    <location>
        <begin position="26"/>
        <end position="200"/>
    </location>
</feature>
<sequence>MLAFCRSSLKSKKYFIILLALAAIAGLGTHAAWSSNGLPRIDNKTLARLAQQHPVVVLFRHAERCDRSTNQCLSDKTGITVKGTQDARELGNAFSADIPDFDLYSSNTVRTIQSATWFSAGKKLTVDKRLLQCGNEIYSAIKDLQSKAPDKNIVIFTHNHCLTYIAKNKRDATFKPDYLDGLVMHVEKGKVYLDGEFVNH</sequence>